<dbReference type="EMBL" id="CP000513">
    <property type="protein sequence ID" value="ABQ13344.1"/>
    <property type="molecule type" value="Genomic_DNA"/>
</dbReference>
<dbReference type="RefSeq" id="WP_012031449.1">
    <property type="nucleotide sequence ID" value="NC_009446.1"/>
</dbReference>
<dbReference type="SMR" id="A5EXJ8"/>
<dbReference type="STRING" id="246195.DNO_1145"/>
<dbReference type="KEGG" id="dno:DNO_1145"/>
<dbReference type="eggNOG" id="COG0712">
    <property type="taxonomic scope" value="Bacteria"/>
</dbReference>
<dbReference type="HOGENOM" id="CLU_085114_3_0_6"/>
<dbReference type="OrthoDB" id="9816221at2"/>
<dbReference type="Proteomes" id="UP000000248">
    <property type="component" value="Chromosome"/>
</dbReference>
<dbReference type="GO" id="GO:0005886">
    <property type="term" value="C:plasma membrane"/>
    <property type="evidence" value="ECO:0007669"/>
    <property type="project" value="UniProtKB-SubCell"/>
</dbReference>
<dbReference type="GO" id="GO:0045259">
    <property type="term" value="C:proton-transporting ATP synthase complex"/>
    <property type="evidence" value="ECO:0007669"/>
    <property type="project" value="UniProtKB-KW"/>
</dbReference>
<dbReference type="GO" id="GO:0046933">
    <property type="term" value="F:proton-transporting ATP synthase activity, rotational mechanism"/>
    <property type="evidence" value="ECO:0007669"/>
    <property type="project" value="UniProtKB-UniRule"/>
</dbReference>
<dbReference type="Gene3D" id="1.10.520.20">
    <property type="entry name" value="N-terminal domain of the delta subunit of the F1F0-ATP synthase"/>
    <property type="match status" value="1"/>
</dbReference>
<dbReference type="HAMAP" id="MF_01416">
    <property type="entry name" value="ATP_synth_delta_bact"/>
    <property type="match status" value="1"/>
</dbReference>
<dbReference type="InterPro" id="IPR026015">
    <property type="entry name" value="ATP_synth_OSCP/delta_N_sf"/>
</dbReference>
<dbReference type="InterPro" id="IPR000711">
    <property type="entry name" value="ATPase_OSCP/dsu"/>
</dbReference>
<dbReference type="NCBIfam" id="TIGR01145">
    <property type="entry name" value="ATP_synt_delta"/>
    <property type="match status" value="1"/>
</dbReference>
<dbReference type="NCBIfam" id="NF004402">
    <property type="entry name" value="PRK05758.2-2"/>
    <property type="match status" value="1"/>
</dbReference>
<dbReference type="PANTHER" id="PTHR11910">
    <property type="entry name" value="ATP SYNTHASE DELTA CHAIN"/>
    <property type="match status" value="1"/>
</dbReference>
<dbReference type="Pfam" id="PF00213">
    <property type="entry name" value="OSCP"/>
    <property type="match status" value="1"/>
</dbReference>
<dbReference type="PRINTS" id="PR00125">
    <property type="entry name" value="ATPASEDELTA"/>
</dbReference>
<dbReference type="SUPFAM" id="SSF47928">
    <property type="entry name" value="N-terminal domain of the delta subunit of the F1F0-ATP synthase"/>
    <property type="match status" value="1"/>
</dbReference>
<feature type="chain" id="PRO_0000370968" description="ATP synthase subunit delta">
    <location>
        <begin position="1"/>
        <end position="184"/>
    </location>
</feature>
<proteinExistence type="inferred from homology"/>
<reference key="1">
    <citation type="journal article" date="2007" name="Nat. Biotechnol.">
        <title>Genome sequence and identification of candidate vaccine antigens from the animal pathogen Dichelobacter nodosus.</title>
        <authorList>
            <person name="Myers G.S.A."/>
            <person name="Parker D."/>
            <person name="Al-Hasani K."/>
            <person name="Kennan R.M."/>
            <person name="Seemann T."/>
            <person name="Ren Q."/>
            <person name="Badger J.H."/>
            <person name="Selengut J.D."/>
            <person name="Deboy R.T."/>
            <person name="Tettelin H."/>
            <person name="Boyce J.D."/>
            <person name="McCarl V.P."/>
            <person name="Han X."/>
            <person name="Nelson W.C."/>
            <person name="Madupu R."/>
            <person name="Mohamoud Y."/>
            <person name="Holley T."/>
            <person name="Fedorova N."/>
            <person name="Khouri H."/>
            <person name="Bottomley S.P."/>
            <person name="Whittington R.J."/>
            <person name="Adler B."/>
            <person name="Songer J.G."/>
            <person name="Rood J.I."/>
            <person name="Paulsen I.T."/>
        </authorList>
    </citation>
    <scope>NUCLEOTIDE SEQUENCE [LARGE SCALE GENOMIC DNA]</scope>
    <source>
        <strain>VCS1703A</strain>
    </source>
</reference>
<evidence type="ECO:0000255" key="1">
    <source>
        <dbReference type="HAMAP-Rule" id="MF_01416"/>
    </source>
</evidence>
<keyword id="KW-0066">ATP synthesis</keyword>
<keyword id="KW-0997">Cell inner membrane</keyword>
<keyword id="KW-1003">Cell membrane</keyword>
<keyword id="KW-0139">CF(1)</keyword>
<keyword id="KW-0375">Hydrogen ion transport</keyword>
<keyword id="KW-0406">Ion transport</keyword>
<keyword id="KW-0472">Membrane</keyword>
<keyword id="KW-1185">Reference proteome</keyword>
<keyword id="KW-0813">Transport</keyword>
<gene>
    <name evidence="1" type="primary">atpH</name>
    <name type="ordered locus">DNO_1145</name>
</gene>
<accession>A5EXJ8</accession>
<sequence>MSQTETIARPYAKAVFEQAVETESVANWIDFLEIASTFVSNEAVKEHLASASFMENFLVWFEQFLVESRGEALSEQERNFLNVLNQQGRMAIVPEIATQFKQLYYSAQNVCKATVYTALALDEKQKKELQATIERNVHREVVLDVREEPALIAGVRIEYDGMVIDQSARGRLERFARMLDESRN</sequence>
<name>ATPD_DICNV</name>
<comment type="function">
    <text evidence="1">F(1)F(0) ATP synthase produces ATP from ADP in the presence of a proton or sodium gradient. F-type ATPases consist of two structural domains, F(1) containing the extramembraneous catalytic core and F(0) containing the membrane proton channel, linked together by a central stalk and a peripheral stalk. During catalysis, ATP synthesis in the catalytic domain of F(1) is coupled via a rotary mechanism of the central stalk subunits to proton translocation.</text>
</comment>
<comment type="function">
    <text evidence="1">This protein is part of the stalk that links CF(0) to CF(1). It either transmits conformational changes from CF(0) to CF(1) or is implicated in proton conduction.</text>
</comment>
<comment type="subunit">
    <text evidence="1">F-type ATPases have 2 components, F(1) - the catalytic core - and F(0) - the membrane proton channel. F(1) has five subunits: alpha(3), beta(3), gamma(1), delta(1), epsilon(1). F(0) has three main subunits: a(1), b(2) and c(10-14). The alpha and beta chains form an alternating ring which encloses part of the gamma chain. F(1) is attached to F(0) by a central stalk formed by the gamma and epsilon chains, while a peripheral stalk is formed by the delta and b chains.</text>
</comment>
<comment type="subcellular location">
    <subcellularLocation>
        <location evidence="1">Cell inner membrane</location>
        <topology evidence="1">Peripheral membrane protein</topology>
    </subcellularLocation>
</comment>
<comment type="similarity">
    <text evidence="1">Belongs to the ATPase delta chain family.</text>
</comment>
<organism>
    <name type="scientific">Dichelobacter nodosus (strain VCS1703A)</name>
    <dbReference type="NCBI Taxonomy" id="246195"/>
    <lineage>
        <taxon>Bacteria</taxon>
        <taxon>Pseudomonadati</taxon>
        <taxon>Pseudomonadota</taxon>
        <taxon>Gammaproteobacteria</taxon>
        <taxon>Cardiobacteriales</taxon>
        <taxon>Cardiobacteriaceae</taxon>
        <taxon>Dichelobacter</taxon>
    </lineage>
</organism>
<protein>
    <recommendedName>
        <fullName evidence="1">ATP synthase subunit delta</fullName>
    </recommendedName>
    <alternativeName>
        <fullName evidence="1">ATP synthase F(1) sector subunit delta</fullName>
    </alternativeName>
    <alternativeName>
        <fullName evidence="1">F-type ATPase subunit delta</fullName>
        <shortName evidence="1">F-ATPase subunit delta</shortName>
    </alternativeName>
</protein>